<keyword id="KW-0002">3D-structure</keyword>
<keyword id="KW-0024">Alternative initiation</keyword>
<keyword id="KW-0025">Alternative splicing</keyword>
<keyword id="KW-0167">Capsid protein</keyword>
<keyword id="KW-1015">Disulfide bond</keyword>
<keyword id="KW-1048">Host nucleus</keyword>
<keyword id="KW-0945">Host-virus interaction</keyword>
<keyword id="KW-0426">Late protein</keyword>
<keyword id="KW-1185">Reference proteome</keyword>
<keyword id="KW-1145">T=7 icosahedral capsid protein</keyword>
<keyword id="KW-1161">Viral attachment to host cell</keyword>
<keyword id="KW-1162">Viral penetration into host cytoplasm</keyword>
<keyword id="KW-0946">Virion</keyword>
<keyword id="KW-1164">Virus endocytosis by host</keyword>
<keyword id="KW-1160">Virus entry into host cell</keyword>
<organismHost>
    <name type="scientific">Psittacidae</name>
    <name type="common">parrots</name>
    <dbReference type="NCBI Taxonomy" id="9224"/>
</organismHost>
<evidence type="ECO:0000250" key="1"/>
<evidence type="ECO:0000305" key="2"/>
<reference key="1">
    <citation type="journal article" date="1988" name="Virology">
        <title>The genome of budgerigar fledgling disease virus, an avian polyomavirus.</title>
        <authorList>
            <person name="Rott O."/>
            <person name="Kroeger M."/>
            <person name="Mueller H."/>
            <person name="Hobom G."/>
        </authorList>
    </citation>
    <scope>NUCLEOTIDE SEQUENCE [GENOMIC DNA]</scope>
</reference>
<reference key="2">
    <citation type="submission" date="1999-01" db="EMBL/GenBank/DDBJ databases">
        <title>Avian polyomavirus infection and disease in a green aracaris (Pteroglossus viridis).</title>
        <authorList>
            <person name="Lafferty S.L."/>
            <person name="Fudge A.M."/>
            <person name="Schmidt R.E."/>
            <person name="Wilson V.G."/>
            <person name="Phalen D.N."/>
        </authorList>
    </citation>
    <scope>NUCLEOTIDE SEQUENCE [GENOMIC DNA]</scope>
</reference>
<reference key="3">
    <citation type="journal article" date="2009" name="Virology">
        <title>The Polyomaviridae: Contributions of virus structure to our understanding of virus receptors and infectious entry.</title>
        <authorList>
            <person name="Neu U."/>
            <person name="Stehle T."/>
            <person name="Atwood W.J."/>
        </authorList>
    </citation>
    <scope>REVIEW</scope>
</reference>
<reference key="4">
    <citation type="journal article" date="2011" name="Virology">
        <title>The structure of avian polyomavirus reveals variably sized capsids, non-conserved inter-capsomere interactions, and a possible location of the minor capsid protein VP4.</title>
        <authorList>
            <person name="Shen P.S."/>
            <person name="Enderlein D."/>
            <person name="Nelson C.D."/>
            <person name="Carter W.S."/>
            <person name="Kawano M."/>
            <person name="Xing L."/>
            <person name="Swenson R.D."/>
            <person name="Olson N.H."/>
            <person name="Baker T.S."/>
            <person name="Cheng R.H."/>
            <person name="Atwood W.J."/>
            <person name="Johne R."/>
            <person name="Belnap D.M."/>
        </authorList>
    </citation>
    <scope>STRUCTURE BY ELECTRON MICROSCOPY</scope>
</reference>
<comment type="function">
    <text evidence="1">Forms an icosahedral capsid with a T=7 symmetry and a 46-48 nm diameter. The capsid is composed of 72 pentamers linked to each other by disulfide bonds and associated with VP2 or VP3 proteins. Interacts with sialic acids on the cell surface to provide virion attachment to target cell. Once attached, the virion is internalized by endocytosis and traffics to the endoplasmic reticulum. Inside the endoplasmic reticulum, the protein folding machinery isomerizes VP1 interpentamer disulfide bonds, thereby triggering initial uncoating. Next, the virion uses the endoplasmic reticulum-associated degradation machinery to probably translocate in the cytosol before reaching the nucleus. Nuclear entry of the viral DNA involves the selective exposure and importin recognition of VP2/Vp3 nuclear localization signal. In late phase of infection, neo-synthesized VP1 encapsulates replicated genomic DNA in the nucleus, and participates in rearranging nucleosomes around the viral DNA (By similarity).</text>
</comment>
<comment type="subunit">
    <text evidence="1">Homomultimer; disulfide-linked. The virus capsid is composed of 72 icosahedral units, each one composed of five disulfide-linked copies of VP1. Interacts with minor capsid proteins VP2 and VP3 (By similarity).</text>
</comment>
<comment type="subcellular location">
    <subcellularLocation>
        <location>Virion</location>
    </subcellularLocation>
    <subcellularLocation>
        <location evidence="1">Host nucleus</location>
    </subcellularLocation>
</comment>
<comment type="alternative products">
    <event type="alternative splicing"/>
    <event type="alternative initiation"/>
    <isoform>
        <id>P13891-1</id>
        <name>VP1</name>
        <sequence type="displayed"/>
    </isoform>
    <isoform>
        <id>P13892-1</id>
        <name>VP2</name>
        <name>Minor capsid protein VP2</name>
        <sequence type="external"/>
    </isoform>
    <isoform>
        <id>P13892-2</id>
        <name>VP3</name>
        <name>Minor capsid protein VP3</name>
        <sequence type="external"/>
    </isoform>
    <isoform>
        <id>A6QL29-1</id>
        <name>Agno-1a</name>
        <sequence type="external"/>
    </isoform>
    <isoform>
        <id>A6QL29-2</id>
        <name>Agno-1b</name>
        <sequence type="external"/>
    </isoform>
    <isoform>
        <id>P13893-1</id>
        <name>Agno-2b</name>
        <sequence type="external"/>
    </isoform>
    <isoform>
        <id>P13893-2</id>
        <name>Agno-2a</name>
        <sequence type="external"/>
    </isoform>
</comment>
<comment type="domain">
    <text evidence="1">The N-terminal region contains a nuclear signal but the presence of VP2 and VP3 proteins is required for efficient nuclear transport.</text>
</comment>
<comment type="miscellaneous">
    <molecule>Isoform VP1</molecule>
    <text>Produced by alternative splicing of the late mRNA.</text>
</comment>
<comment type="similarity">
    <text evidence="2">Belongs to the polyomaviruses coat protein VP1 family.</text>
</comment>
<accession>P13891</accession>
<accession>Q9WG02</accession>
<sequence>MSQKGKGSCPRPQQVPRLLVKGGIEVLDVKSGPDSITTIEAYLQPRPGQKNGYSTVITVQAEGYQDAPHSTEVPCYSCARIPLPTINDDITCPTLLMWEAVSVKTEVVGVSSILNMHSGAFRAFNGYGGGFTICGPRIHFFSVGGEPLDLQACMQNSKTVYPAPLIGPGEGERRETAQVLDTGYKARLDKDGLYPIECWCPDPAKNENTRYYGNLTGGPETPPVLAFTNTTTTILLDENGVGPLCKGDGLFLSAADVAGTYVDQRGRQYWRGLPRYFSIQLRKRNVRNPYPVSGLLNSLFNDLMPRMTGQSMQGSDAQVEEVRVYEGMEGLAPEIDMPPKAPR</sequence>
<protein>
    <recommendedName>
        <fullName>Major capsid protein VP1</fullName>
    </recommendedName>
    <alternativeName>
        <fullName>Major structural protein VP1</fullName>
    </alternativeName>
</protein>
<proteinExistence type="evidence at protein level"/>
<dbReference type="EMBL" id="M20775">
    <property type="protein sequence ID" value="AAB59759.1"/>
    <property type="molecule type" value="Genomic_DNA"/>
</dbReference>
<dbReference type="EMBL" id="AF118150">
    <property type="protein sequence ID" value="AAD30960.1"/>
    <property type="molecule type" value="Genomic_DNA"/>
</dbReference>
<dbReference type="PIR" id="C29194">
    <property type="entry name" value="VVVPBD"/>
</dbReference>
<dbReference type="PDB" id="3IYS">
    <property type="method" value="EM"/>
    <property type="chains" value="A/B/C/D/E/F=1-343"/>
</dbReference>
<dbReference type="PDBsum" id="3IYS"/>
<dbReference type="SMR" id="P13891"/>
<dbReference type="EvolutionaryTrace" id="P13891"/>
<dbReference type="Proteomes" id="UP000134051">
    <property type="component" value="Genome"/>
</dbReference>
<dbReference type="Proteomes" id="UP000180851">
    <property type="component" value="Genome"/>
</dbReference>
<dbReference type="GO" id="GO:0042025">
    <property type="term" value="C:host cell nucleus"/>
    <property type="evidence" value="ECO:0007669"/>
    <property type="project" value="UniProtKB-SubCell"/>
</dbReference>
<dbReference type="GO" id="GO:0039620">
    <property type="term" value="C:T=7 icosahedral viral capsid"/>
    <property type="evidence" value="ECO:0007669"/>
    <property type="project" value="UniProtKB-KW"/>
</dbReference>
<dbReference type="GO" id="GO:0005198">
    <property type="term" value="F:structural molecule activity"/>
    <property type="evidence" value="ECO:0007669"/>
    <property type="project" value="InterPro"/>
</dbReference>
<dbReference type="GO" id="GO:0075509">
    <property type="term" value="P:endocytosis involved in viral entry into host cell"/>
    <property type="evidence" value="ECO:0007669"/>
    <property type="project" value="UniProtKB-KW"/>
</dbReference>
<dbReference type="GO" id="GO:0019062">
    <property type="term" value="P:virion attachment to host cell"/>
    <property type="evidence" value="ECO:0007669"/>
    <property type="project" value="UniProtKB-KW"/>
</dbReference>
<dbReference type="Gene3D" id="2.60.175.10">
    <property type="entry name" value="Capsid protein VP1,Polyomavirus"/>
    <property type="match status" value="1"/>
</dbReference>
<dbReference type="InterPro" id="IPR000662">
    <property type="entry name" value="Capsid_VP1_Polyomavir"/>
</dbReference>
<dbReference type="InterPro" id="IPR011222">
    <property type="entry name" value="dsDNA_vir_gr_I_capsid"/>
</dbReference>
<dbReference type="InterPro" id="IPR036931">
    <property type="entry name" value="Polyomavir_VP1_sf"/>
</dbReference>
<dbReference type="Pfam" id="PF00718">
    <property type="entry name" value="Polyoma_coat"/>
    <property type="match status" value="1"/>
</dbReference>
<dbReference type="PIRSF" id="PIRSF003376">
    <property type="entry name" value="Capsid_VP1_Polyomavir"/>
    <property type="match status" value="1"/>
</dbReference>
<dbReference type="SUPFAM" id="SSF88648">
    <property type="entry name" value="Group I dsDNA viruses"/>
    <property type="match status" value="1"/>
</dbReference>
<organism>
    <name type="scientific">Budgerigar fledgling disease virus</name>
    <name type="common">BFPyV</name>
    <name type="synonym">Aves polyomavirus 1</name>
    <dbReference type="NCBI Taxonomy" id="1891747"/>
    <lineage>
        <taxon>Viruses</taxon>
        <taxon>Monodnaviria</taxon>
        <taxon>Shotokuvirae</taxon>
        <taxon>Cossaviricota</taxon>
        <taxon>Papovaviricetes</taxon>
        <taxon>Sepolyvirales</taxon>
        <taxon>Polyomaviridae</taxon>
        <taxon>Gammapolyomavirus</taxon>
    </lineage>
</organism>
<feature type="chain" id="PRO_0000115016" description="Major capsid protein VP1">
    <location>
        <begin position="1"/>
        <end position="343"/>
    </location>
</feature>
<feature type="disulfide bond" description="Interchain (with C-92)" evidence="1">
    <location>
        <position position="92"/>
    </location>
</feature>
<feature type="sequence variant">
    <original>R</original>
    <variation>P</variation>
    <location>
        <position position="173"/>
    </location>
</feature>
<name>VP1_BFPYV</name>